<proteinExistence type="inferred from homology"/>
<name>THIG_SALRD</name>
<dbReference type="EC" id="2.8.1.10" evidence="1"/>
<dbReference type="EMBL" id="CP000159">
    <property type="protein sequence ID" value="ABC46087.1"/>
    <property type="molecule type" value="Genomic_DNA"/>
</dbReference>
<dbReference type="RefSeq" id="WP_011403988.1">
    <property type="nucleotide sequence ID" value="NC_007677.1"/>
</dbReference>
<dbReference type="RefSeq" id="YP_445360.1">
    <property type="nucleotide sequence ID" value="NC_007677.1"/>
</dbReference>
<dbReference type="SMR" id="Q2S371"/>
<dbReference type="STRING" id="309807.SRU_1235"/>
<dbReference type="EnsemblBacteria" id="ABC46087">
    <property type="protein sequence ID" value="ABC46087"/>
    <property type="gene ID" value="SRU_1235"/>
</dbReference>
<dbReference type="KEGG" id="sru:SRU_1235"/>
<dbReference type="PATRIC" id="fig|309807.25.peg.1283"/>
<dbReference type="eggNOG" id="COG2022">
    <property type="taxonomic scope" value="Bacteria"/>
</dbReference>
<dbReference type="HOGENOM" id="CLU_062233_1_0_10"/>
<dbReference type="OrthoDB" id="9805935at2"/>
<dbReference type="UniPathway" id="UPA00060"/>
<dbReference type="Proteomes" id="UP000008674">
    <property type="component" value="Chromosome"/>
</dbReference>
<dbReference type="GO" id="GO:0005737">
    <property type="term" value="C:cytoplasm"/>
    <property type="evidence" value="ECO:0007669"/>
    <property type="project" value="UniProtKB-SubCell"/>
</dbReference>
<dbReference type="GO" id="GO:1990107">
    <property type="term" value="F:thiazole synthase activity"/>
    <property type="evidence" value="ECO:0007669"/>
    <property type="project" value="UniProtKB-EC"/>
</dbReference>
<dbReference type="GO" id="GO:0009229">
    <property type="term" value="P:thiamine diphosphate biosynthetic process"/>
    <property type="evidence" value="ECO:0007669"/>
    <property type="project" value="UniProtKB-UniRule"/>
</dbReference>
<dbReference type="CDD" id="cd04728">
    <property type="entry name" value="ThiG"/>
    <property type="match status" value="1"/>
</dbReference>
<dbReference type="Gene3D" id="3.20.20.70">
    <property type="entry name" value="Aldolase class I"/>
    <property type="match status" value="1"/>
</dbReference>
<dbReference type="HAMAP" id="MF_00443">
    <property type="entry name" value="ThiG"/>
    <property type="match status" value="1"/>
</dbReference>
<dbReference type="InterPro" id="IPR013785">
    <property type="entry name" value="Aldolase_TIM"/>
</dbReference>
<dbReference type="InterPro" id="IPR033983">
    <property type="entry name" value="Thiazole_synthase_ThiG"/>
</dbReference>
<dbReference type="InterPro" id="IPR008867">
    <property type="entry name" value="ThiG"/>
</dbReference>
<dbReference type="PANTHER" id="PTHR34266">
    <property type="entry name" value="THIAZOLE SYNTHASE"/>
    <property type="match status" value="1"/>
</dbReference>
<dbReference type="PANTHER" id="PTHR34266:SF2">
    <property type="entry name" value="THIAZOLE SYNTHASE"/>
    <property type="match status" value="1"/>
</dbReference>
<dbReference type="Pfam" id="PF05690">
    <property type="entry name" value="ThiG"/>
    <property type="match status" value="1"/>
</dbReference>
<dbReference type="SUPFAM" id="SSF110399">
    <property type="entry name" value="ThiG-like"/>
    <property type="match status" value="1"/>
</dbReference>
<reference key="1">
    <citation type="journal article" date="2005" name="Proc. Natl. Acad. Sci. U.S.A.">
        <title>The genome of Salinibacter ruber: convergence and gene exchange among hyperhalophilic bacteria and archaea.</title>
        <authorList>
            <person name="Mongodin E.F."/>
            <person name="Nelson K.E."/>
            <person name="Daugherty S."/>
            <person name="DeBoy R.T."/>
            <person name="Wister J."/>
            <person name="Khouri H."/>
            <person name="Weidman J."/>
            <person name="Walsh D.A."/>
            <person name="Papke R.T."/>
            <person name="Sanchez Perez G."/>
            <person name="Sharma A.K."/>
            <person name="Nesbo C.L."/>
            <person name="MacLeod D."/>
            <person name="Bapteste E."/>
            <person name="Doolittle W.F."/>
            <person name="Charlebois R.L."/>
            <person name="Legault B."/>
            <person name="Rodriguez-Valera F."/>
        </authorList>
    </citation>
    <scope>NUCLEOTIDE SEQUENCE [LARGE SCALE GENOMIC DNA]</scope>
    <source>
        <strain>DSM 13855 / CECT 5946 / M31</strain>
    </source>
</reference>
<comment type="function">
    <text evidence="1">Catalyzes the rearrangement of 1-deoxy-D-xylulose 5-phosphate (DXP) to produce the thiazole phosphate moiety of thiamine. Sulfur is provided by the thiocarboxylate moiety of the carrier protein ThiS. In vitro, sulfur can be provided by H(2)S.</text>
</comment>
<comment type="catalytic activity">
    <reaction evidence="1">
        <text>[ThiS sulfur-carrier protein]-C-terminal-Gly-aminoethanethioate + 2-iminoacetate + 1-deoxy-D-xylulose 5-phosphate = [ThiS sulfur-carrier protein]-C-terminal Gly-Gly + 2-[(2R,5Z)-2-carboxy-4-methylthiazol-5(2H)-ylidene]ethyl phosphate + 2 H2O + H(+)</text>
        <dbReference type="Rhea" id="RHEA:26297"/>
        <dbReference type="Rhea" id="RHEA-COMP:12909"/>
        <dbReference type="Rhea" id="RHEA-COMP:19908"/>
        <dbReference type="ChEBI" id="CHEBI:15377"/>
        <dbReference type="ChEBI" id="CHEBI:15378"/>
        <dbReference type="ChEBI" id="CHEBI:57792"/>
        <dbReference type="ChEBI" id="CHEBI:62899"/>
        <dbReference type="ChEBI" id="CHEBI:77846"/>
        <dbReference type="ChEBI" id="CHEBI:90778"/>
        <dbReference type="ChEBI" id="CHEBI:232372"/>
        <dbReference type="EC" id="2.8.1.10"/>
    </reaction>
</comment>
<comment type="pathway">
    <text evidence="1">Cofactor biosynthesis; thiamine diphosphate biosynthesis.</text>
</comment>
<comment type="subunit">
    <text evidence="1">Homotetramer. Forms heterodimers with either ThiH or ThiS.</text>
</comment>
<comment type="subcellular location">
    <subcellularLocation>
        <location evidence="1">Cytoplasm</location>
    </subcellularLocation>
</comment>
<comment type="similarity">
    <text evidence="1">Belongs to the ThiG family.</text>
</comment>
<accession>Q2S371</accession>
<organism>
    <name type="scientific">Salinibacter ruber (strain DSM 13855 / M31)</name>
    <dbReference type="NCBI Taxonomy" id="309807"/>
    <lineage>
        <taxon>Bacteria</taxon>
        <taxon>Pseudomonadati</taxon>
        <taxon>Rhodothermota</taxon>
        <taxon>Rhodothermia</taxon>
        <taxon>Rhodothermales</taxon>
        <taxon>Salinibacteraceae</taxon>
        <taxon>Salinibacter</taxon>
    </lineage>
</organism>
<feature type="chain" id="PRO_0000236363" description="Thiazole synthase">
    <location>
        <begin position="1"/>
        <end position="273"/>
    </location>
</feature>
<feature type="active site" description="Schiff-base intermediate with DXP" evidence="1">
    <location>
        <position position="113"/>
    </location>
</feature>
<feature type="binding site" evidence="1">
    <location>
        <position position="174"/>
    </location>
    <ligand>
        <name>1-deoxy-D-xylulose 5-phosphate</name>
        <dbReference type="ChEBI" id="CHEBI:57792"/>
    </ligand>
</feature>
<feature type="binding site" evidence="1">
    <location>
        <begin position="201"/>
        <end position="202"/>
    </location>
    <ligand>
        <name>1-deoxy-D-xylulose 5-phosphate</name>
        <dbReference type="ChEBI" id="CHEBI:57792"/>
    </ligand>
</feature>
<feature type="binding site" evidence="1">
    <location>
        <begin position="223"/>
        <end position="224"/>
    </location>
    <ligand>
        <name>1-deoxy-D-xylulose 5-phosphate</name>
        <dbReference type="ChEBI" id="CHEBI:57792"/>
    </ligand>
</feature>
<sequence>MSDVTHANGAVANEADDALVIGDHSFSSRILVGTSRYPNPQVMLDALEATGTELVTVAIRRVNIENPAPESHLDLLRRGGYEVLPNTAGCYTAREAVLTARLAREALGTDLLKLEVIGDDETLMPDVEQLLDAAKTLVDDGFTVLAYANDDPITCRKLADLGCAAVMPLGSPIGSGMGIVNPYNLRIIREMIEDTPLIVDAGIGTASDAVTAMELGYDGILVNTAIAQAQHPVDMGRAMRKAVEAGRSAHRAGRIPRRLYAEASSSMEGRIGT</sequence>
<gene>
    <name evidence="1" type="primary">thiG</name>
    <name type="ordered locus">SRU_1235</name>
</gene>
<evidence type="ECO:0000255" key="1">
    <source>
        <dbReference type="HAMAP-Rule" id="MF_00443"/>
    </source>
</evidence>
<keyword id="KW-0963">Cytoplasm</keyword>
<keyword id="KW-1185">Reference proteome</keyword>
<keyword id="KW-0704">Schiff base</keyword>
<keyword id="KW-0784">Thiamine biosynthesis</keyword>
<keyword id="KW-0808">Transferase</keyword>
<protein>
    <recommendedName>
        <fullName evidence="1">Thiazole synthase</fullName>
        <ecNumber evidence="1">2.8.1.10</ecNumber>
    </recommendedName>
</protein>